<dbReference type="EMBL" id="L39922">
    <property type="protein sequence ID" value="AAA85344.1"/>
    <property type="molecule type" value="Genomic_DNA"/>
</dbReference>
<dbReference type="EMBL" id="AL123456">
    <property type="protein sequence ID" value="CCP45647.1"/>
    <property type="molecule type" value="Genomic_DNA"/>
</dbReference>
<dbReference type="PIR" id="A70589">
    <property type="entry name" value="A70589"/>
</dbReference>
<dbReference type="RefSeq" id="NP_217362.1">
    <property type="nucleotide sequence ID" value="NC_000962.3"/>
</dbReference>
<dbReference type="RefSeq" id="WP_003414532.1">
    <property type="nucleotide sequence ID" value="NZ_NVQJ01000006.1"/>
</dbReference>
<dbReference type="PDB" id="8UFD">
    <property type="method" value="EM"/>
    <property type="resolution" value="3.26 A"/>
    <property type="chains" value="A/B=1-530"/>
</dbReference>
<dbReference type="PDB" id="8WM5">
    <property type="method" value="EM"/>
    <property type="resolution" value="3.04 A"/>
    <property type="chains" value="A/B=1-530"/>
</dbReference>
<dbReference type="PDB" id="8X6X">
    <property type="method" value="EM"/>
    <property type="resolution" value="2.92 A"/>
    <property type="chains" value="A/B=1-530"/>
</dbReference>
<dbReference type="PDB" id="8YNZ">
    <property type="method" value="EM"/>
    <property type="resolution" value="3.41 A"/>
    <property type="chains" value="A/B=1-530"/>
</dbReference>
<dbReference type="PDB" id="9BII">
    <property type="method" value="EM"/>
    <property type="resolution" value="2.70 A"/>
    <property type="chains" value="A/B=49-530"/>
</dbReference>
<dbReference type="PDB" id="9BIN">
    <property type="method" value="EM"/>
    <property type="resolution" value="3.45 A"/>
    <property type="chains" value="A/B=49-530"/>
</dbReference>
<dbReference type="PDB" id="9BIQ">
    <property type="method" value="EM"/>
    <property type="resolution" value="3.00 A"/>
    <property type="chains" value="A/B=49-530"/>
</dbReference>
<dbReference type="PDB" id="9BL7">
    <property type="method" value="EM"/>
    <property type="resolution" value="3.22 A"/>
    <property type="chains" value="A/B=49-530"/>
</dbReference>
<dbReference type="PDBsum" id="8UFD"/>
<dbReference type="PDBsum" id="8WM5"/>
<dbReference type="PDBsum" id="8X6X"/>
<dbReference type="PDBsum" id="8YNZ"/>
<dbReference type="PDBsum" id="9BII"/>
<dbReference type="PDBsum" id="9BIN"/>
<dbReference type="PDBsum" id="9BIQ"/>
<dbReference type="PDBsum" id="9BL7"/>
<dbReference type="EMDB" id="EMD-37641"/>
<dbReference type="EMDB" id="EMD-38093"/>
<dbReference type="EMDB" id="EMD-39432"/>
<dbReference type="EMDB" id="EMD-44591"/>
<dbReference type="EMDB" id="EMD-44594"/>
<dbReference type="EMDB" id="EMD-44598"/>
<dbReference type="EMDB" id="EMD-44651"/>
<dbReference type="SMR" id="P9WJY5"/>
<dbReference type="FunCoup" id="P9WJY5">
    <property type="interactions" value="99"/>
</dbReference>
<dbReference type="STRING" id="83332.Rv2846c"/>
<dbReference type="DrugBank" id="DB05154">
    <property type="generic name" value="Pretomanid"/>
</dbReference>
<dbReference type="CARD" id="ARO:3003955">
    <property type="molecule name" value="efpA"/>
    <property type="mechanism identifier" value="ARO:0010000"/>
    <property type="mechanism name" value="antibiotic efflux"/>
</dbReference>
<dbReference type="TCDB" id="2.A.1.3.78">
    <property type="family name" value="the major facilitator superfamily (mfs)"/>
</dbReference>
<dbReference type="PaxDb" id="83332-Rv2846c"/>
<dbReference type="DNASU" id="888575"/>
<dbReference type="GeneID" id="888575"/>
<dbReference type="KEGG" id="mtu:Rv2846c"/>
<dbReference type="KEGG" id="mtv:RVBD_2846c"/>
<dbReference type="TubercuList" id="Rv2846c"/>
<dbReference type="eggNOG" id="COG0477">
    <property type="taxonomic scope" value="Bacteria"/>
</dbReference>
<dbReference type="InParanoid" id="P9WJY5"/>
<dbReference type="OrthoDB" id="4080117at2"/>
<dbReference type="PhylomeDB" id="P9WJY5"/>
<dbReference type="Proteomes" id="UP000001584">
    <property type="component" value="Chromosome"/>
</dbReference>
<dbReference type="GO" id="GO:0016020">
    <property type="term" value="C:membrane"/>
    <property type="evidence" value="ECO:0000318"/>
    <property type="project" value="GO_Central"/>
</dbReference>
<dbReference type="GO" id="GO:0005886">
    <property type="term" value="C:plasma membrane"/>
    <property type="evidence" value="ECO:0007669"/>
    <property type="project" value="UniProtKB-SubCell"/>
</dbReference>
<dbReference type="GO" id="GO:0022857">
    <property type="term" value="F:transmembrane transporter activity"/>
    <property type="evidence" value="ECO:0007669"/>
    <property type="project" value="InterPro"/>
</dbReference>
<dbReference type="CDD" id="cd17321">
    <property type="entry name" value="MFS_MMR_MDR_like"/>
    <property type="match status" value="1"/>
</dbReference>
<dbReference type="Gene3D" id="1.20.1250.20">
    <property type="entry name" value="MFS general substrate transporter like domains"/>
    <property type="match status" value="1"/>
</dbReference>
<dbReference type="Gene3D" id="1.20.1720.10">
    <property type="entry name" value="Multidrug resistance protein D"/>
    <property type="match status" value="1"/>
</dbReference>
<dbReference type="InterPro" id="IPR011701">
    <property type="entry name" value="MFS"/>
</dbReference>
<dbReference type="InterPro" id="IPR020846">
    <property type="entry name" value="MFS_dom"/>
</dbReference>
<dbReference type="InterPro" id="IPR036259">
    <property type="entry name" value="MFS_trans_sf"/>
</dbReference>
<dbReference type="PANTHER" id="PTHR42718:SF46">
    <property type="entry name" value="BLR6921 PROTEIN"/>
    <property type="match status" value="1"/>
</dbReference>
<dbReference type="PANTHER" id="PTHR42718">
    <property type="entry name" value="MAJOR FACILITATOR SUPERFAMILY MULTIDRUG TRANSPORTER MFSC"/>
    <property type="match status" value="1"/>
</dbReference>
<dbReference type="Pfam" id="PF07690">
    <property type="entry name" value="MFS_1"/>
    <property type="match status" value="1"/>
</dbReference>
<dbReference type="SUPFAM" id="SSF103473">
    <property type="entry name" value="MFS general substrate transporter"/>
    <property type="match status" value="1"/>
</dbReference>
<dbReference type="PROSITE" id="PS50850">
    <property type="entry name" value="MFS"/>
    <property type="match status" value="1"/>
</dbReference>
<proteinExistence type="evidence at protein level"/>
<feature type="chain" id="PRO_0000390888" description="Uncharacterized MFS-type transporter EfpA">
    <location>
        <begin position="1"/>
        <end position="530"/>
    </location>
</feature>
<feature type="topological domain" description="Cytoplasmic" evidence="1">
    <location>
        <begin position="1"/>
        <end position="50"/>
    </location>
</feature>
<feature type="transmembrane region" description="Helical" evidence="1">
    <location>
        <begin position="51"/>
        <end position="71"/>
    </location>
</feature>
<feature type="topological domain" description="Extracellular" evidence="1">
    <location>
        <begin position="72"/>
        <end position="91"/>
    </location>
</feature>
<feature type="transmembrane region" description="Helical" evidence="1">
    <location>
        <begin position="92"/>
        <end position="112"/>
    </location>
</feature>
<feature type="topological domain" description="Cytoplasmic" evidence="1">
    <location>
        <begin position="113"/>
        <end position="119"/>
    </location>
</feature>
<feature type="transmembrane region" description="Helical" evidence="1">
    <location>
        <begin position="120"/>
        <end position="140"/>
    </location>
</feature>
<feature type="topological domain" description="Extracellular" evidence="1">
    <location>
        <begin position="141"/>
        <end position="150"/>
    </location>
</feature>
<feature type="transmembrane region" description="Helical" evidence="1">
    <location>
        <begin position="151"/>
        <end position="171"/>
    </location>
</feature>
<feature type="topological domain" description="Cytoplasmic" evidence="1">
    <location>
        <begin position="172"/>
        <end position="180"/>
    </location>
</feature>
<feature type="transmembrane region" description="Helical" evidence="1">
    <location>
        <begin position="181"/>
        <end position="201"/>
    </location>
</feature>
<feature type="topological domain" description="Extracellular" evidence="1">
    <location>
        <begin position="202"/>
        <end position="203"/>
    </location>
</feature>
<feature type="transmembrane region" description="Helical" evidence="1">
    <location>
        <begin position="204"/>
        <end position="224"/>
    </location>
</feature>
<feature type="topological domain" description="Cytoplasmic" evidence="1">
    <location>
        <begin position="225"/>
        <end position="239"/>
    </location>
</feature>
<feature type="transmembrane region" description="Helical" evidence="1">
    <location>
        <begin position="240"/>
        <end position="260"/>
    </location>
</feature>
<feature type="topological domain" description="Extracellular" evidence="1">
    <location>
        <begin position="261"/>
        <end position="266"/>
    </location>
</feature>
<feature type="transmembrane region" description="Helical" evidence="1">
    <location>
        <begin position="267"/>
        <end position="287"/>
    </location>
</feature>
<feature type="topological domain" description="Cytoplasmic" evidence="1">
    <location>
        <begin position="288"/>
        <end position="306"/>
    </location>
</feature>
<feature type="transmembrane region" description="Helical" evidence="1">
    <location>
        <begin position="307"/>
        <end position="327"/>
    </location>
</feature>
<feature type="topological domain" description="Extracellular" evidence="1">
    <location>
        <begin position="328"/>
        <end position="343"/>
    </location>
</feature>
<feature type="transmembrane region" description="Helical" evidence="1">
    <location>
        <begin position="344"/>
        <end position="364"/>
    </location>
</feature>
<feature type="topological domain" description="Cytoplasmic" evidence="1">
    <location>
        <begin position="365"/>
        <end position="370"/>
    </location>
</feature>
<feature type="transmembrane region" description="Helical" evidence="1">
    <location>
        <begin position="371"/>
        <end position="391"/>
    </location>
</feature>
<feature type="topological domain" description="Extracellular" evidence="1">
    <location>
        <begin position="392"/>
        <end position="400"/>
    </location>
</feature>
<feature type="transmembrane region" description="Helical" evidence="1">
    <location>
        <begin position="401"/>
        <end position="421"/>
    </location>
</feature>
<feature type="topological domain" description="Cytoplasmic" evidence="1">
    <location>
        <begin position="422"/>
        <end position="437"/>
    </location>
</feature>
<feature type="transmembrane region" description="Helical" evidence="1">
    <location>
        <begin position="438"/>
        <end position="458"/>
    </location>
</feature>
<feature type="topological domain" description="Extracellular" evidence="1">
    <location>
        <begin position="459"/>
        <end position="488"/>
    </location>
</feature>
<feature type="transmembrane region" description="Helical" evidence="1">
    <location>
        <begin position="489"/>
        <end position="509"/>
    </location>
</feature>
<feature type="topological domain" description="Cytoplasmic" evidence="1">
    <location>
        <begin position="510"/>
        <end position="530"/>
    </location>
</feature>
<feature type="region of interest" description="Disordered" evidence="2">
    <location>
        <begin position="1"/>
        <end position="38"/>
    </location>
</feature>
<feature type="compositionally biased region" description="Basic and acidic residues" evidence="2">
    <location>
        <begin position="1"/>
        <end position="11"/>
    </location>
</feature>
<feature type="compositionally biased region" description="Basic and acidic residues" evidence="2">
    <location>
        <begin position="28"/>
        <end position="38"/>
    </location>
</feature>
<feature type="sequence conflict" description="In Ref. 1; AAA85344." evidence="5" ref="1">
    <original>S</original>
    <variation>T</variation>
    <location>
        <position position="50"/>
    </location>
</feature>
<feature type="sequence conflict" description="In Ref. 1; AAA85344." evidence="5" ref="1">
    <original>A</original>
    <variation>R</variation>
    <location>
        <position position="200"/>
    </location>
</feature>
<feature type="sequence conflict" description="In Ref. 1; AAA85344." evidence="5" ref="1">
    <original>AG</original>
    <variation>R</variation>
    <location>
        <begin position="342"/>
        <end position="343"/>
    </location>
</feature>
<feature type="helix" evidence="6">
    <location>
        <begin position="49"/>
        <end position="74"/>
    </location>
</feature>
<feature type="helix" evidence="6">
    <location>
        <begin position="76"/>
        <end position="83"/>
    </location>
</feature>
<feature type="helix" evidence="6">
    <location>
        <begin position="87"/>
        <end position="103"/>
    </location>
</feature>
<feature type="helix" evidence="6">
    <location>
        <begin position="105"/>
        <end position="115"/>
    </location>
</feature>
<feature type="helix" evidence="6">
    <location>
        <begin position="117"/>
        <end position="136"/>
    </location>
</feature>
<feature type="helix" evidence="6">
    <location>
        <begin position="141"/>
        <end position="169"/>
    </location>
</feature>
<feature type="helix" evidence="6">
    <location>
        <begin position="174"/>
        <end position="201"/>
    </location>
</feature>
<feature type="turn" evidence="6">
    <location>
        <begin position="202"/>
        <end position="204"/>
    </location>
</feature>
<feature type="turn" evidence="6">
    <location>
        <begin position="207"/>
        <end position="212"/>
    </location>
</feature>
<feature type="helix" evidence="6">
    <location>
        <begin position="213"/>
        <end position="227"/>
    </location>
</feature>
<feature type="helix" evidence="6">
    <location>
        <begin position="240"/>
        <end position="263"/>
    </location>
</feature>
<feature type="helix" evidence="6">
    <location>
        <begin position="268"/>
        <end position="287"/>
    </location>
</feature>
<feature type="helix" evidence="6">
    <location>
        <begin position="288"/>
        <end position="290"/>
    </location>
</feature>
<feature type="helix" evidence="6">
    <location>
        <begin position="299"/>
        <end position="301"/>
    </location>
</feature>
<feature type="helix" evidence="6">
    <location>
        <begin position="304"/>
        <end position="333"/>
    </location>
</feature>
<feature type="helix" evidence="6">
    <location>
        <begin position="339"/>
        <end position="345"/>
    </location>
</feature>
<feature type="helix" evidence="6">
    <location>
        <begin position="347"/>
        <end position="363"/>
    </location>
</feature>
<feature type="turn" evidence="6">
    <location>
        <begin position="364"/>
        <end position="366"/>
    </location>
</feature>
<feature type="helix" evidence="6">
    <location>
        <begin position="369"/>
        <end position="389"/>
    </location>
</feature>
<feature type="helix" evidence="6">
    <location>
        <begin position="397"/>
        <end position="400"/>
    </location>
</feature>
<feature type="helix" evidence="6">
    <location>
        <begin position="402"/>
        <end position="422"/>
    </location>
</feature>
<feature type="strand" evidence="6">
    <location>
        <begin position="429"/>
        <end position="431"/>
    </location>
</feature>
<feature type="helix" evidence="6">
    <location>
        <begin position="432"/>
        <end position="464"/>
    </location>
</feature>
<feature type="helix" evidence="6">
    <location>
        <begin position="472"/>
        <end position="474"/>
    </location>
</feature>
<feature type="helix" evidence="6">
    <location>
        <begin position="477"/>
        <end position="505"/>
    </location>
</feature>
<feature type="helix" evidence="6">
    <location>
        <begin position="512"/>
        <end position="515"/>
    </location>
</feature>
<gene>
    <name type="primary">efpA</name>
    <name type="ordered locus">Rv2846c</name>
</gene>
<organism>
    <name type="scientific">Mycobacterium tuberculosis (strain ATCC 25618 / H37Rv)</name>
    <dbReference type="NCBI Taxonomy" id="83332"/>
    <lineage>
        <taxon>Bacteria</taxon>
        <taxon>Bacillati</taxon>
        <taxon>Actinomycetota</taxon>
        <taxon>Actinomycetes</taxon>
        <taxon>Mycobacteriales</taxon>
        <taxon>Mycobacteriaceae</taxon>
        <taxon>Mycobacterium</taxon>
        <taxon>Mycobacterium tuberculosis complex</taxon>
    </lineage>
</organism>
<comment type="subcellular location">
    <subcellularLocation>
        <location evidence="5">Cell membrane</location>
        <topology evidence="5">Multi-pass membrane protein</topology>
    </subcellularLocation>
</comment>
<comment type="induction">
    <text evidence="3 4">Expressed during infection of macrophages. Down-regulated by the nucleoid-associated protein Lsr2.</text>
</comment>
<comment type="similarity">
    <text evidence="5">Belongs to the major facilitator superfamily.</text>
</comment>
<accession>P9WJY5</accession>
<accession>L0TDQ9</accession>
<accession>O05813</accession>
<accession>Q50747</accession>
<accession>Q7D6G8</accession>
<sequence>MTALNDTERAVRNWTAGRPHRPAPMRPPRSEETASERPSRYYPTWLPSRSFIAAVIAIGGMQLLATMDSTVAIVALPKIQNELSLSDAGRSWVITAYVLTFGGLMLLGGRLGDTIGRKRTFIVGVALFTISSVLCAVAWDEATLVIARLSQGVGSAIASPTGLALVATTFPKGPARNAATAVFAAMTAIGSVMGLVVGGALTEVSWRWAFLVNVPIGLVMIYLARTALRETNKERMKLDATGAILATLACTAAVFAFSIGPEKGWMSGITIGSGLVALAAAVAFVIVERTAENPVVPFHLFRDRNRLVTFSAILLAGGVMFSLTVCIGLYVQDILGYSALRAGVGFIPFVIAMGIGLGVSSQLVSRFSPRVLTIGGGYLLFGAMLYGSFFMHRGVPYFPNLVMPIVVGGIGIGMAVVPLTLSAIAGVGFDQIGPVSAIALMLQSLGGPLVLAVIQAVITSRTLYLGGTTGPVKFMNDVQLAALDHAYTYGLLWVAGAAIIVGGMALFIGYTPQQVAHAQEVKEAIDAGEL</sequence>
<keyword id="KW-0002">3D-structure</keyword>
<keyword id="KW-1003">Cell membrane</keyword>
<keyword id="KW-0472">Membrane</keyword>
<keyword id="KW-1185">Reference proteome</keyword>
<keyword id="KW-0812">Transmembrane</keyword>
<keyword id="KW-1133">Transmembrane helix</keyword>
<keyword id="KW-0813">Transport</keyword>
<reference key="1">
    <citation type="journal article" date="1997" name="Clin. Diagn. Lab. Immunol.">
        <title>Mycobacterium tuberculosis efpA encodes an efflux protein of the QacA transporter family.</title>
        <authorList>
            <person name="Doran J.L."/>
            <person name="Pang Y."/>
            <person name="Mdluli K.E."/>
            <person name="Moran A.J."/>
            <person name="Victor T.C."/>
            <person name="Stokes R.W."/>
            <person name="Mahenthiralingam E."/>
            <person name="Kreiswirth B.N."/>
            <person name="Butt J.L."/>
            <person name="Baron G.S."/>
            <person name="Treit J.D."/>
            <person name="Kerr V.J."/>
            <person name="Van Helden P.D."/>
            <person name="Roberts M.C."/>
            <person name="Nano F.E."/>
        </authorList>
    </citation>
    <scope>NUCLEOTIDE SEQUENCE [GENOMIC DNA]</scope>
    <scope>INDUCTION</scope>
    <source>
        <strain>ATCC 25618 / H37Rv</strain>
    </source>
</reference>
<reference key="2">
    <citation type="journal article" date="1998" name="Nature">
        <title>Deciphering the biology of Mycobacterium tuberculosis from the complete genome sequence.</title>
        <authorList>
            <person name="Cole S.T."/>
            <person name="Brosch R."/>
            <person name="Parkhill J."/>
            <person name="Garnier T."/>
            <person name="Churcher C.M."/>
            <person name="Harris D.E."/>
            <person name="Gordon S.V."/>
            <person name="Eiglmeier K."/>
            <person name="Gas S."/>
            <person name="Barry C.E. III"/>
            <person name="Tekaia F."/>
            <person name="Badcock K."/>
            <person name="Basham D."/>
            <person name="Brown D."/>
            <person name="Chillingworth T."/>
            <person name="Connor R."/>
            <person name="Davies R.M."/>
            <person name="Devlin K."/>
            <person name="Feltwell T."/>
            <person name="Gentles S."/>
            <person name="Hamlin N."/>
            <person name="Holroyd S."/>
            <person name="Hornsby T."/>
            <person name="Jagels K."/>
            <person name="Krogh A."/>
            <person name="McLean J."/>
            <person name="Moule S."/>
            <person name="Murphy L.D."/>
            <person name="Oliver S."/>
            <person name="Osborne J."/>
            <person name="Quail M.A."/>
            <person name="Rajandream M.A."/>
            <person name="Rogers J."/>
            <person name="Rutter S."/>
            <person name="Seeger K."/>
            <person name="Skelton S."/>
            <person name="Squares S."/>
            <person name="Squares R."/>
            <person name="Sulston J.E."/>
            <person name="Taylor K."/>
            <person name="Whitehead S."/>
            <person name="Barrell B.G."/>
        </authorList>
    </citation>
    <scope>NUCLEOTIDE SEQUENCE [LARGE SCALE GENOMIC DNA]</scope>
    <source>
        <strain>ATCC 25618 / H37Rv</strain>
    </source>
</reference>
<reference key="3">
    <citation type="journal article" date="2007" name="PLoS Pathog.">
        <title>Transcriptional regulation of multi-drug tolerance and antibiotic-induced responses by the histone-like protein Lsr2 in M. tuberculosis.</title>
        <authorList>
            <person name="Colangeli R."/>
            <person name="Helb D."/>
            <person name="Vilcheze C."/>
            <person name="Hazbon M.H."/>
            <person name="Lee C.G."/>
            <person name="Safi H."/>
            <person name="Sayers B."/>
            <person name="Sardone I."/>
            <person name="Jones M.B."/>
            <person name="Fleischmann R.D."/>
            <person name="Peterson S.N."/>
            <person name="Jacobs W.R. Jr."/>
            <person name="Alland D."/>
        </authorList>
    </citation>
    <scope>INDUCTION</scope>
    <source>
        <strain>ATCC 25618 / H37Rv</strain>
    </source>
</reference>
<reference key="4">
    <citation type="journal article" date="2011" name="Mol. Cell. Proteomics">
        <title>Proteogenomic analysis of Mycobacterium tuberculosis by high resolution mass spectrometry.</title>
        <authorList>
            <person name="Kelkar D.S."/>
            <person name="Kumar D."/>
            <person name="Kumar P."/>
            <person name="Balakrishnan L."/>
            <person name="Muthusamy B."/>
            <person name="Yadav A.K."/>
            <person name="Shrivastava P."/>
            <person name="Marimuthu A."/>
            <person name="Anand S."/>
            <person name="Sundaram H."/>
            <person name="Kingsbury R."/>
            <person name="Harsha H.C."/>
            <person name="Nair B."/>
            <person name="Prasad T.S."/>
            <person name="Chauhan D.S."/>
            <person name="Katoch K."/>
            <person name="Katoch V.M."/>
            <person name="Kumar P."/>
            <person name="Chaerkady R."/>
            <person name="Ramachandran S."/>
            <person name="Dash D."/>
            <person name="Pandey A."/>
        </authorList>
    </citation>
    <scope>IDENTIFICATION BY MASS SPECTROMETRY [LARGE SCALE ANALYSIS]</scope>
    <source>
        <strain>ATCC 25618 / H37Rv</strain>
    </source>
</reference>
<name>EFPA_MYCTU</name>
<protein>
    <recommendedName>
        <fullName>Uncharacterized MFS-type transporter EfpA</fullName>
    </recommendedName>
    <alternativeName>
        <fullName>Efflux protein A</fullName>
    </alternativeName>
</protein>
<evidence type="ECO:0000255" key="1"/>
<evidence type="ECO:0000256" key="2">
    <source>
        <dbReference type="SAM" id="MobiDB-lite"/>
    </source>
</evidence>
<evidence type="ECO:0000269" key="3">
    <source>
    </source>
</evidence>
<evidence type="ECO:0000269" key="4">
    <source>
    </source>
</evidence>
<evidence type="ECO:0000305" key="5"/>
<evidence type="ECO:0007829" key="6">
    <source>
        <dbReference type="PDB" id="8X6X"/>
    </source>
</evidence>